<sequence length="399" mass="41699">MLFLGAGELGKEVAIELMRLGAWVCAADSYAGAPAQQVAHEYRALDMANAAELQALFDEIKPDIIVPEVEAIATDVLAGTAAAGAQVVPSAEIAAICMDRERLRVLAHEELGLPTTPYRFAGSLEELRAGASEVGYPCVVKPVMSSSGHGQSVVRSADAIDAAWTEAQEGRRAADEGDVSRVIVEALAPLERELTVLTVSSSAGIVTCAPIGQRQESGDYRESWQPATEPDGEAERARDIARTAVEGLVAKAQAAGETGWGVFGVELFVLTDGSILFNEVSPRPHDTGMVTMASQRLSEFALHARAILGLPITPEHVSLTIPAGSVAASHAIVVAGDGEVEFTDVAAALAEPGTDLRIFAKPEVHGHRRMAVALAVGESEADARAKAGLVADALTITVE</sequence>
<name>PURT_BIFLO</name>
<reference key="1">
    <citation type="journal article" date="2002" name="Proc. Natl. Acad. Sci. U.S.A.">
        <title>The genome sequence of Bifidobacterium longum reflects its adaptation to the human gastrointestinal tract.</title>
        <authorList>
            <person name="Schell M.A."/>
            <person name="Karmirantzou M."/>
            <person name="Snel B."/>
            <person name="Vilanova D."/>
            <person name="Berger B."/>
            <person name="Pessi G."/>
            <person name="Zwahlen M.-C."/>
            <person name="Desiere F."/>
            <person name="Bork P."/>
            <person name="Delley M."/>
            <person name="Pridmore R.D."/>
            <person name="Arigoni F."/>
        </authorList>
    </citation>
    <scope>NUCLEOTIDE SEQUENCE [LARGE SCALE GENOMIC DNA]</scope>
    <source>
        <strain>NCC 2705</strain>
    </source>
</reference>
<dbReference type="EC" id="6.3.1.21" evidence="1"/>
<dbReference type="EMBL" id="AE014295">
    <property type="protein sequence ID" value="AAN24913.1"/>
    <property type="status" value="ALT_INIT"/>
    <property type="molecule type" value="Genomic_DNA"/>
</dbReference>
<dbReference type="RefSeq" id="NP_696277.1">
    <property type="nucleotide sequence ID" value="NC_004307.2"/>
</dbReference>
<dbReference type="SMR" id="Q8G5B0"/>
<dbReference type="STRING" id="206672.BL1105"/>
<dbReference type="EnsemblBacteria" id="AAN24913">
    <property type="protein sequence ID" value="AAN24913"/>
    <property type="gene ID" value="BL1105"/>
</dbReference>
<dbReference type="KEGG" id="blo:BL1105"/>
<dbReference type="PATRIC" id="fig|206672.9.peg.813"/>
<dbReference type="HOGENOM" id="CLU_011534_1_3_11"/>
<dbReference type="OrthoDB" id="9804625at2"/>
<dbReference type="UniPathway" id="UPA00074">
    <property type="reaction ID" value="UER00127"/>
</dbReference>
<dbReference type="Proteomes" id="UP000000439">
    <property type="component" value="Chromosome"/>
</dbReference>
<dbReference type="GO" id="GO:0005829">
    <property type="term" value="C:cytosol"/>
    <property type="evidence" value="ECO:0007669"/>
    <property type="project" value="TreeGrafter"/>
</dbReference>
<dbReference type="GO" id="GO:0005524">
    <property type="term" value="F:ATP binding"/>
    <property type="evidence" value="ECO:0007669"/>
    <property type="project" value="UniProtKB-UniRule"/>
</dbReference>
<dbReference type="GO" id="GO:0000287">
    <property type="term" value="F:magnesium ion binding"/>
    <property type="evidence" value="ECO:0007669"/>
    <property type="project" value="InterPro"/>
</dbReference>
<dbReference type="GO" id="GO:0043815">
    <property type="term" value="F:phosphoribosylglycinamide formyltransferase 2 activity"/>
    <property type="evidence" value="ECO:0007669"/>
    <property type="project" value="UniProtKB-UniRule"/>
</dbReference>
<dbReference type="GO" id="GO:0004644">
    <property type="term" value="F:phosphoribosylglycinamide formyltransferase activity"/>
    <property type="evidence" value="ECO:0007669"/>
    <property type="project" value="InterPro"/>
</dbReference>
<dbReference type="GO" id="GO:0006189">
    <property type="term" value="P:'de novo' IMP biosynthetic process"/>
    <property type="evidence" value="ECO:0007669"/>
    <property type="project" value="UniProtKB-UniRule"/>
</dbReference>
<dbReference type="Gene3D" id="3.40.50.20">
    <property type="match status" value="1"/>
</dbReference>
<dbReference type="Gene3D" id="3.30.1490.20">
    <property type="entry name" value="ATP-grasp fold, A domain"/>
    <property type="match status" value="1"/>
</dbReference>
<dbReference type="Gene3D" id="3.30.470.20">
    <property type="entry name" value="ATP-grasp fold, B domain"/>
    <property type="match status" value="1"/>
</dbReference>
<dbReference type="HAMAP" id="MF_01643">
    <property type="entry name" value="PurT"/>
    <property type="match status" value="1"/>
</dbReference>
<dbReference type="InterPro" id="IPR011761">
    <property type="entry name" value="ATP-grasp"/>
</dbReference>
<dbReference type="InterPro" id="IPR003135">
    <property type="entry name" value="ATP-grasp_carboxylate-amine"/>
</dbReference>
<dbReference type="InterPro" id="IPR013815">
    <property type="entry name" value="ATP_grasp_subdomain_1"/>
</dbReference>
<dbReference type="InterPro" id="IPR016185">
    <property type="entry name" value="PreATP-grasp_dom_sf"/>
</dbReference>
<dbReference type="InterPro" id="IPR005862">
    <property type="entry name" value="PurT"/>
</dbReference>
<dbReference type="InterPro" id="IPR054350">
    <property type="entry name" value="PurT/PurK_preATP-grasp"/>
</dbReference>
<dbReference type="InterPro" id="IPR048740">
    <property type="entry name" value="PurT_C"/>
</dbReference>
<dbReference type="InterPro" id="IPR011054">
    <property type="entry name" value="Rudment_hybrid_motif"/>
</dbReference>
<dbReference type="NCBIfam" id="NF006766">
    <property type="entry name" value="PRK09288.1"/>
    <property type="match status" value="1"/>
</dbReference>
<dbReference type="PANTHER" id="PTHR43055">
    <property type="entry name" value="FORMATE-DEPENDENT PHOSPHORIBOSYLGLYCINAMIDE FORMYLTRANSFERASE"/>
    <property type="match status" value="1"/>
</dbReference>
<dbReference type="PANTHER" id="PTHR43055:SF1">
    <property type="entry name" value="FORMATE-DEPENDENT PHOSPHORIBOSYLGLYCINAMIDE FORMYLTRANSFERASE"/>
    <property type="match status" value="1"/>
</dbReference>
<dbReference type="Pfam" id="PF02222">
    <property type="entry name" value="ATP-grasp"/>
    <property type="match status" value="1"/>
</dbReference>
<dbReference type="Pfam" id="PF21244">
    <property type="entry name" value="PurT_C"/>
    <property type="match status" value="1"/>
</dbReference>
<dbReference type="Pfam" id="PF22660">
    <property type="entry name" value="RS_preATP-grasp-like"/>
    <property type="match status" value="1"/>
</dbReference>
<dbReference type="SUPFAM" id="SSF56059">
    <property type="entry name" value="Glutathione synthetase ATP-binding domain-like"/>
    <property type="match status" value="1"/>
</dbReference>
<dbReference type="SUPFAM" id="SSF52440">
    <property type="entry name" value="PreATP-grasp domain"/>
    <property type="match status" value="1"/>
</dbReference>
<dbReference type="SUPFAM" id="SSF51246">
    <property type="entry name" value="Rudiment single hybrid motif"/>
    <property type="match status" value="1"/>
</dbReference>
<dbReference type="PROSITE" id="PS50975">
    <property type="entry name" value="ATP_GRASP"/>
    <property type="match status" value="1"/>
</dbReference>
<comment type="function">
    <text evidence="1">Involved in the de novo purine biosynthesis. Catalyzes the transfer of formate to 5-phospho-ribosyl-glycinamide (GAR), producing 5-phospho-ribosyl-N-formylglycinamide (FGAR). Formate is provided by PurU via hydrolysis of 10-formyl-tetrahydrofolate.</text>
</comment>
<comment type="catalytic activity">
    <reaction evidence="1">
        <text>N(1)-(5-phospho-beta-D-ribosyl)glycinamide + formate + ATP = N(2)-formyl-N(1)-(5-phospho-beta-D-ribosyl)glycinamide + ADP + phosphate + H(+)</text>
        <dbReference type="Rhea" id="RHEA:24829"/>
        <dbReference type="ChEBI" id="CHEBI:15378"/>
        <dbReference type="ChEBI" id="CHEBI:15740"/>
        <dbReference type="ChEBI" id="CHEBI:30616"/>
        <dbReference type="ChEBI" id="CHEBI:43474"/>
        <dbReference type="ChEBI" id="CHEBI:143788"/>
        <dbReference type="ChEBI" id="CHEBI:147286"/>
        <dbReference type="ChEBI" id="CHEBI:456216"/>
        <dbReference type="EC" id="6.3.1.21"/>
    </reaction>
    <physiologicalReaction direction="left-to-right" evidence="1">
        <dbReference type="Rhea" id="RHEA:24830"/>
    </physiologicalReaction>
</comment>
<comment type="pathway">
    <text evidence="1">Purine metabolism; IMP biosynthesis via de novo pathway; N(2)-formyl-N(1)-(5-phospho-D-ribosyl)glycinamide from N(1)-(5-phospho-D-ribosyl)glycinamide (formate route): step 1/1.</text>
</comment>
<comment type="subunit">
    <text evidence="1">Homodimer.</text>
</comment>
<comment type="similarity">
    <text evidence="1">Belongs to the PurK/PurT family.</text>
</comment>
<comment type="sequence caution" evidence="2">
    <conflict type="erroneous initiation">
        <sequence resource="EMBL-CDS" id="AAN24913"/>
    </conflict>
</comment>
<proteinExistence type="inferred from homology"/>
<gene>
    <name evidence="1" type="primary">purT</name>
    <name type="ordered locus">BL1105</name>
</gene>
<feature type="chain" id="PRO_0000319129" description="Formate-dependent phosphoribosylglycinamide formyltransferase">
    <location>
        <begin position="1"/>
        <end position="399"/>
    </location>
</feature>
<feature type="domain" description="ATP-grasp" evidence="1">
    <location>
        <begin position="105"/>
        <end position="308"/>
    </location>
</feature>
<feature type="binding site" evidence="1">
    <location>
        <begin position="8"/>
        <end position="9"/>
    </location>
    <ligand>
        <name>N(1)-(5-phospho-beta-D-ribosyl)glycinamide</name>
        <dbReference type="ChEBI" id="CHEBI:143788"/>
    </ligand>
</feature>
<feature type="binding site" evidence="1">
    <location>
        <position position="68"/>
    </location>
    <ligand>
        <name>N(1)-(5-phospho-beta-D-ribosyl)glycinamide</name>
        <dbReference type="ChEBI" id="CHEBI:143788"/>
    </ligand>
</feature>
<feature type="binding site" evidence="1">
    <location>
        <position position="100"/>
    </location>
    <ligand>
        <name>ATP</name>
        <dbReference type="ChEBI" id="CHEBI:30616"/>
    </ligand>
</feature>
<feature type="binding site" evidence="1">
    <location>
        <position position="141"/>
    </location>
    <ligand>
        <name>ATP</name>
        <dbReference type="ChEBI" id="CHEBI:30616"/>
    </ligand>
</feature>
<feature type="binding site" evidence="1">
    <location>
        <begin position="146"/>
        <end position="151"/>
    </location>
    <ligand>
        <name>ATP</name>
        <dbReference type="ChEBI" id="CHEBI:30616"/>
    </ligand>
</feature>
<feature type="binding site" evidence="1">
    <location>
        <begin position="185"/>
        <end position="188"/>
    </location>
    <ligand>
        <name>ATP</name>
        <dbReference type="ChEBI" id="CHEBI:30616"/>
    </ligand>
</feature>
<feature type="binding site" evidence="1">
    <location>
        <position position="193"/>
    </location>
    <ligand>
        <name>ATP</name>
        <dbReference type="ChEBI" id="CHEBI:30616"/>
    </ligand>
</feature>
<feature type="binding site" evidence="1">
    <location>
        <position position="266"/>
    </location>
    <ligand>
        <name>Mg(2+)</name>
        <dbReference type="ChEBI" id="CHEBI:18420"/>
    </ligand>
</feature>
<feature type="binding site" evidence="1">
    <location>
        <position position="279"/>
    </location>
    <ligand>
        <name>Mg(2+)</name>
        <dbReference type="ChEBI" id="CHEBI:18420"/>
    </ligand>
</feature>
<feature type="binding site" evidence="1">
    <location>
        <position position="286"/>
    </location>
    <ligand>
        <name>N(1)-(5-phospho-beta-D-ribosyl)glycinamide</name>
        <dbReference type="ChEBI" id="CHEBI:143788"/>
    </ligand>
</feature>
<feature type="binding site" evidence="1">
    <location>
        <position position="361"/>
    </location>
    <ligand>
        <name>N(1)-(5-phospho-beta-D-ribosyl)glycinamide</name>
        <dbReference type="ChEBI" id="CHEBI:143788"/>
    </ligand>
</feature>
<feature type="binding site" evidence="1">
    <location>
        <begin position="368"/>
        <end position="369"/>
    </location>
    <ligand>
        <name>N(1)-(5-phospho-beta-D-ribosyl)glycinamide</name>
        <dbReference type="ChEBI" id="CHEBI:143788"/>
    </ligand>
</feature>
<protein>
    <recommendedName>
        <fullName evidence="1">Formate-dependent phosphoribosylglycinamide formyltransferase</fullName>
        <ecNumber evidence="1">6.3.1.21</ecNumber>
    </recommendedName>
    <alternativeName>
        <fullName evidence="1">5'-phosphoribosylglycinamide transformylase 2</fullName>
    </alternativeName>
    <alternativeName>
        <fullName evidence="1">Formate-dependent GAR transformylase</fullName>
    </alternativeName>
    <alternativeName>
        <fullName evidence="1">GAR transformylase 2</fullName>
        <shortName evidence="1">GART 2</shortName>
    </alternativeName>
    <alternativeName>
        <fullName evidence="1">Non-folate glycinamide ribonucleotide transformylase</fullName>
    </alternativeName>
    <alternativeName>
        <fullName evidence="1">Phosphoribosylglycinamide formyltransferase 2</fullName>
    </alternativeName>
</protein>
<accession>Q8G5B0</accession>
<organism>
    <name type="scientific">Bifidobacterium longum (strain NCC 2705)</name>
    <dbReference type="NCBI Taxonomy" id="206672"/>
    <lineage>
        <taxon>Bacteria</taxon>
        <taxon>Bacillati</taxon>
        <taxon>Actinomycetota</taxon>
        <taxon>Actinomycetes</taxon>
        <taxon>Bifidobacteriales</taxon>
        <taxon>Bifidobacteriaceae</taxon>
        <taxon>Bifidobacterium</taxon>
    </lineage>
</organism>
<keyword id="KW-0067">ATP-binding</keyword>
<keyword id="KW-0436">Ligase</keyword>
<keyword id="KW-0460">Magnesium</keyword>
<keyword id="KW-0479">Metal-binding</keyword>
<keyword id="KW-0547">Nucleotide-binding</keyword>
<keyword id="KW-0658">Purine biosynthesis</keyword>
<keyword id="KW-1185">Reference proteome</keyword>
<evidence type="ECO:0000255" key="1">
    <source>
        <dbReference type="HAMAP-Rule" id="MF_01643"/>
    </source>
</evidence>
<evidence type="ECO:0000305" key="2"/>